<keyword id="KW-0004">4Fe-4S</keyword>
<keyword id="KW-0963">Cytoplasm</keyword>
<keyword id="KW-0408">Iron</keyword>
<keyword id="KW-0411">Iron-sulfur</keyword>
<keyword id="KW-0479">Metal-binding</keyword>
<keyword id="KW-0949">S-adenosyl-L-methionine</keyword>
<keyword id="KW-0808">Transferase</keyword>
<protein>
    <recommendedName>
        <fullName evidence="1">Lipoyl synthase</fullName>
        <ecNumber evidence="1">2.8.1.8</ecNumber>
    </recommendedName>
    <alternativeName>
        <fullName evidence="1">Lip-syn</fullName>
        <shortName evidence="1">LS</shortName>
    </alternativeName>
    <alternativeName>
        <fullName evidence="1">Lipoate synthase</fullName>
    </alternativeName>
    <alternativeName>
        <fullName evidence="1">Lipoic acid synthase</fullName>
    </alternativeName>
    <alternativeName>
        <fullName evidence="1">Sulfur insertion protein LipA</fullName>
    </alternativeName>
</protein>
<evidence type="ECO:0000255" key="1">
    <source>
        <dbReference type="HAMAP-Rule" id="MF_00206"/>
    </source>
</evidence>
<evidence type="ECO:0000255" key="2">
    <source>
        <dbReference type="PROSITE-ProRule" id="PRU01266"/>
    </source>
</evidence>
<proteinExistence type="inferred from homology"/>
<organism>
    <name type="scientific">Yersinia pseudotuberculosis serotype O:3 (strain YPIII)</name>
    <dbReference type="NCBI Taxonomy" id="502800"/>
    <lineage>
        <taxon>Bacteria</taxon>
        <taxon>Pseudomonadati</taxon>
        <taxon>Pseudomonadota</taxon>
        <taxon>Gammaproteobacteria</taxon>
        <taxon>Enterobacterales</taxon>
        <taxon>Yersiniaceae</taxon>
        <taxon>Yersinia</taxon>
    </lineage>
</organism>
<comment type="function">
    <text evidence="1">Catalyzes the radical-mediated insertion of two sulfur atoms into the C-6 and C-8 positions of the octanoyl moiety bound to the lipoyl domains of lipoate-dependent enzymes, thereby converting the octanoylated domains into lipoylated derivatives.</text>
</comment>
<comment type="catalytic activity">
    <reaction evidence="1">
        <text>[[Fe-S] cluster scaffold protein carrying a second [4Fe-4S](2+) cluster] + N(6)-octanoyl-L-lysyl-[protein] + 2 oxidized [2Fe-2S]-[ferredoxin] + 2 S-adenosyl-L-methionine + 4 H(+) = [[Fe-S] cluster scaffold protein] + N(6)-[(R)-dihydrolipoyl]-L-lysyl-[protein] + 4 Fe(3+) + 2 hydrogen sulfide + 2 5'-deoxyadenosine + 2 L-methionine + 2 reduced [2Fe-2S]-[ferredoxin]</text>
        <dbReference type="Rhea" id="RHEA:16585"/>
        <dbReference type="Rhea" id="RHEA-COMP:9928"/>
        <dbReference type="Rhea" id="RHEA-COMP:10000"/>
        <dbReference type="Rhea" id="RHEA-COMP:10001"/>
        <dbReference type="Rhea" id="RHEA-COMP:10475"/>
        <dbReference type="Rhea" id="RHEA-COMP:14568"/>
        <dbReference type="Rhea" id="RHEA-COMP:14569"/>
        <dbReference type="ChEBI" id="CHEBI:15378"/>
        <dbReference type="ChEBI" id="CHEBI:17319"/>
        <dbReference type="ChEBI" id="CHEBI:29034"/>
        <dbReference type="ChEBI" id="CHEBI:29919"/>
        <dbReference type="ChEBI" id="CHEBI:33722"/>
        <dbReference type="ChEBI" id="CHEBI:33737"/>
        <dbReference type="ChEBI" id="CHEBI:33738"/>
        <dbReference type="ChEBI" id="CHEBI:57844"/>
        <dbReference type="ChEBI" id="CHEBI:59789"/>
        <dbReference type="ChEBI" id="CHEBI:78809"/>
        <dbReference type="ChEBI" id="CHEBI:83100"/>
        <dbReference type="EC" id="2.8.1.8"/>
    </reaction>
</comment>
<comment type="cofactor">
    <cofactor evidence="1">
        <name>[4Fe-4S] cluster</name>
        <dbReference type="ChEBI" id="CHEBI:49883"/>
    </cofactor>
    <text evidence="1">Binds 2 [4Fe-4S] clusters per subunit. One cluster is coordinated with 3 cysteines and an exchangeable S-adenosyl-L-methionine.</text>
</comment>
<comment type="pathway">
    <text evidence="1">Protein modification; protein lipoylation via endogenous pathway; protein N(6)-(lipoyl)lysine from octanoyl-[acyl-carrier-protein]: step 2/2.</text>
</comment>
<comment type="subcellular location">
    <subcellularLocation>
        <location evidence="1">Cytoplasm</location>
    </subcellularLocation>
</comment>
<comment type="similarity">
    <text evidence="1">Belongs to the radical SAM superfamily. Lipoyl synthase family.</text>
</comment>
<gene>
    <name evidence="1" type="primary">lipA</name>
    <name type="ordered locus">YPK_3027</name>
</gene>
<dbReference type="EC" id="2.8.1.8" evidence="1"/>
<dbReference type="EMBL" id="CP000950">
    <property type="protein sequence ID" value="ACA69300.1"/>
    <property type="molecule type" value="Genomic_DNA"/>
</dbReference>
<dbReference type="RefSeq" id="WP_002210320.1">
    <property type="nucleotide sequence ID" value="NZ_CP009792.1"/>
</dbReference>
<dbReference type="SMR" id="B1JGB7"/>
<dbReference type="GeneID" id="96664611"/>
<dbReference type="KEGG" id="ypy:YPK_3027"/>
<dbReference type="PATRIC" id="fig|502800.11.peg.3748"/>
<dbReference type="UniPathway" id="UPA00538">
    <property type="reaction ID" value="UER00593"/>
</dbReference>
<dbReference type="GO" id="GO:0005737">
    <property type="term" value="C:cytoplasm"/>
    <property type="evidence" value="ECO:0007669"/>
    <property type="project" value="UniProtKB-SubCell"/>
</dbReference>
<dbReference type="GO" id="GO:0051539">
    <property type="term" value="F:4 iron, 4 sulfur cluster binding"/>
    <property type="evidence" value="ECO:0007669"/>
    <property type="project" value="UniProtKB-UniRule"/>
</dbReference>
<dbReference type="GO" id="GO:0016992">
    <property type="term" value="F:lipoate synthase activity"/>
    <property type="evidence" value="ECO:0007669"/>
    <property type="project" value="UniProtKB-UniRule"/>
</dbReference>
<dbReference type="GO" id="GO:0046872">
    <property type="term" value="F:metal ion binding"/>
    <property type="evidence" value="ECO:0007669"/>
    <property type="project" value="UniProtKB-KW"/>
</dbReference>
<dbReference type="CDD" id="cd01335">
    <property type="entry name" value="Radical_SAM"/>
    <property type="match status" value="1"/>
</dbReference>
<dbReference type="FunFam" id="3.20.20.70:FF:000023">
    <property type="entry name" value="Lipoyl synthase"/>
    <property type="match status" value="1"/>
</dbReference>
<dbReference type="Gene3D" id="3.20.20.70">
    <property type="entry name" value="Aldolase class I"/>
    <property type="match status" value="1"/>
</dbReference>
<dbReference type="HAMAP" id="MF_00206">
    <property type="entry name" value="Lipoyl_synth"/>
    <property type="match status" value="1"/>
</dbReference>
<dbReference type="InterPro" id="IPR013785">
    <property type="entry name" value="Aldolase_TIM"/>
</dbReference>
<dbReference type="InterPro" id="IPR006638">
    <property type="entry name" value="Elp3/MiaA/NifB-like_rSAM"/>
</dbReference>
<dbReference type="InterPro" id="IPR031691">
    <property type="entry name" value="LIAS_N"/>
</dbReference>
<dbReference type="InterPro" id="IPR003698">
    <property type="entry name" value="Lipoyl_synth"/>
</dbReference>
<dbReference type="InterPro" id="IPR007197">
    <property type="entry name" value="rSAM"/>
</dbReference>
<dbReference type="NCBIfam" id="TIGR00510">
    <property type="entry name" value="lipA"/>
    <property type="match status" value="1"/>
</dbReference>
<dbReference type="NCBIfam" id="NF004019">
    <property type="entry name" value="PRK05481.1"/>
    <property type="match status" value="1"/>
</dbReference>
<dbReference type="NCBIfam" id="NF009544">
    <property type="entry name" value="PRK12928.1"/>
    <property type="match status" value="1"/>
</dbReference>
<dbReference type="PANTHER" id="PTHR10949">
    <property type="entry name" value="LIPOYL SYNTHASE"/>
    <property type="match status" value="1"/>
</dbReference>
<dbReference type="PANTHER" id="PTHR10949:SF0">
    <property type="entry name" value="LIPOYL SYNTHASE, MITOCHONDRIAL"/>
    <property type="match status" value="1"/>
</dbReference>
<dbReference type="Pfam" id="PF16881">
    <property type="entry name" value="LIAS_N"/>
    <property type="match status" value="1"/>
</dbReference>
<dbReference type="Pfam" id="PF04055">
    <property type="entry name" value="Radical_SAM"/>
    <property type="match status" value="1"/>
</dbReference>
<dbReference type="PIRSF" id="PIRSF005963">
    <property type="entry name" value="Lipoyl_synth"/>
    <property type="match status" value="1"/>
</dbReference>
<dbReference type="SFLD" id="SFLDF00271">
    <property type="entry name" value="lipoyl_synthase"/>
    <property type="match status" value="1"/>
</dbReference>
<dbReference type="SFLD" id="SFLDG01058">
    <property type="entry name" value="lipoyl_synthase_like"/>
    <property type="match status" value="1"/>
</dbReference>
<dbReference type="SMART" id="SM00729">
    <property type="entry name" value="Elp3"/>
    <property type="match status" value="1"/>
</dbReference>
<dbReference type="SUPFAM" id="SSF102114">
    <property type="entry name" value="Radical SAM enzymes"/>
    <property type="match status" value="1"/>
</dbReference>
<dbReference type="PROSITE" id="PS51918">
    <property type="entry name" value="RADICAL_SAM"/>
    <property type="match status" value="1"/>
</dbReference>
<accession>B1JGB7</accession>
<name>LIPA_YERPY</name>
<sequence>MSKPIQMERGVKYRDADKMALIPVKNVVTERQELLRKPEWLKIKLPTDSSRIQGIKAAMRKNGLHSVCEEASCPNLSECFNHGTATFMILGAICTRRCPFCDVAHGRPVTPDANEPEKLAQTIQDMGLRYVVITSVDRDDLRDGGAQHFADCISAIRAKNPTIKIETLVPDFRGRMDRALDILTATPPDVFNHNLENVPRVYRQVRPGANYDWSLKLLERFKEAHPDIPTKSGLMVGLGETNAEIVEVMHDLRRHGVTMLTLGQYLQPSRHHLPVQRYVSPAEFDEMKAEAMAMGFTHAACGPFVRSSYHADLQAKGMEVK</sequence>
<reference key="1">
    <citation type="submission" date="2008-02" db="EMBL/GenBank/DDBJ databases">
        <title>Complete sequence of Yersinia pseudotuberculosis YPIII.</title>
        <authorList>
            <consortium name="US DOE Joint Genome Institute"/>
            <person name="Copeland A."/>
            <person name="Lucas S."/>
            <person name="Lapidus A."/>
            <person name="Glavina del Rio T."/>
            <person name="Dalin E."/>
            <person name="Tice H."/>
            <person name="Bruce D."/>
            <person name="Goodwin L."/>
            <person name="Pitluck S."/>
            <person name="Munk A.C."/>
            <person name="Brettin T."/>
            <person name="Detter J.C."/>
            <person name="Han C."/>
            <person name="Tapia R."/>
            <person name="Schmutz J."/>
            <person name="Larimer F."/>
            <person name="Land M."/>
            <person name="Hauser L."/>
            <person name="Challacombe J.F."/>
            <person name="Green L."/>
            <person name="Lindler L.E."/>
            <person name="Nikolich M.P."/>
            <person name="Richardson P."/>
        </authorList>
    </citation>
    <scope>NUCLEOTIDE SEQUENCE [LARGE SCALE GENOMIC DNA]</scope>
    <source>
        <strain>YPIII</strain>
    </source>
</reference>
<feature type="chain" id="PRO_1000099648" description="Lipoyl synthase">
    <location>
        <begin position="1"/>
        <end position="321"/>
    </location>
</feature>
<feature type="domain" description="Radical SAM core" evidence="2">
    <location>
        <begin position="80"/>
        <end position="297"/>
    </location>
</feature>
<feature type="binding site" evidence="1">
    <location>
        <position position="68"/>
    </location>
    <ligand>
        <name>[4Fe-4S] cluster</name>
        <dbReference type="ChEBI" id="CHEBI:49883"/>
        <label>1</label>
    </ligand>
</feature>
<feature type="binding site" evidence="1">
    <location>
        <position position="73"/>
    </location>
    <ligand>
        <name>[4Fe-4S] cluster</name>
        <dbReference type="ChEBI" id="CHEBI:49883"/>
        <label>1</label>
    </ligand>
</feature>
<feature type="binding site" evidence="1">
    <location>
        <position position="79"/>
    </location>
    <ligand>
        <name>[4Fe-4S] cluster</name>
        <dbReference type="ChEBI" id="CHEBI:49883"/>
        <label>1</label>
    </ligand>
</feature>
<feature type="binding site" evidence="1">
    <location>
        <position position="94"/>
    </location>
    <ligand>
        <name>[4Fe-4S] cluster</name>
        <dbReference type="ChEBI" id="CHEBI:49883"/>
        <label>2</label>
        <note>4Fe-4S-S-AdoMet</note>
    </ligand>
</feature>
<feature type="binding site" evidence="1">
    <location>
        <position position="98"/>
    </location>
    <ligand>
        <name>[4Fe-4S] cluster</name>
        <dbReference type="ChEBI" id="CHEBI:49883"/>
        <label>2</label>
        <note>4Fe-4S-S-AdoMet</note>
    </ligand>
</feature>
<feature type="binding site" evidence="1">
    <location>
        <position position="101"/>
    </location>
    <ligand>
        <name>[4Fe-4S] cluster</name>
        <dbReference type="ChEBI" id="CHEBI:49883"/>
        <label>2</label>
        <note>4Fe-4S-S-AdoMet</note>
    </ligand>
</feature>
<feature type="binding site" evidence="1">
    <location>
        <position position="308"/>
    </location>
    <ligand>
        <name>[4Fe-4S] cluster</name>
        <dbReference type="ChEBI" id="CHEBI:49883"/>
        <label>1</label>
    </ligand>
</feature>